<proteinExistence type="evidence at transcript level"/>
<protein>
    <recommendedName>
        <fullName>Sorbitol dehydrogenase</fullName>
        <shortName>SDH</shortName>
        <ecNumber evidence="1">1.1.1.-</ecNumber>
    </recommendedName>
    <alternativeName>
        <fullName>L-iditol 2-dehydrogenase</fullName>
        <ecNumber evidence="1">1.1.1.14</ecNumber>
    </alternativeName>
    <alternativeName>
        <fullName evidence="4">Polyol dehydrogenase</fullName>
    </alternativeName>
    <alternativeName>
        <fullName>Xylitol dehydrogenase</fullName>
        <shortName>XDH</shortName>
        <ecNumber evidence="1">1.1.1.9</ecNumber>
    </alternativeName>
</protein>
<dbReference type="EC" id="1.1.1.-" evidence="1"/>
<dbReference type="EC" id="1.1.1.14" evidence="1"/>
<dbReference type="EC" id="1.1.1.9" evidence="1"/>
<dbReference type="EMBL" id="AB169351">
    <property type="protein sequence ID" value="BAE01436.1"/>
    <property type="molecule type" value="mRNA"/>
</dbReference>
<dbReference type="RefSeq" id="NP_001270085.1">
    <property type="nucleotide sequence ID" value="NM_001283156.1"/>
</dbReference>
<dbReference type="RefSeq" id="XP_045251308.1">
    <property type="nucleotide sequence ID" value="XM_045395373.2"/>
</dbReference>
<dbReference type="SMR" id="Q4R639"/>
<dbReference type="STRING" id="9541.ENSMFAP00000012196"/>
<dbReference type="GeneID" id="101865740"/>
<dbReference type="VEuPathDB" id="HostDB:ENSMFAG00000022177"/>
<dbReference type="eggNOG" id="KOG0024">
    <property type="taxonomic scope" value="Eukaryota"/>
</dbReference>
<dbReference type="OMA" id="FETWYAM"/>
<dbReference type="Proteomes" id="UP000233100">
    <property type="component" value="Chromosome 7"/>
</dbReference>
<dbReference type="GO" id="GO:0031966">
    <property type="term" value="C:mitochondrial membrane"/>
    <property type="evidence" value="ECO:0007669"/>
    <property type="project" value="UniProtKB-SubCell"/>
</dbReference>
<dbReference type="GO" id="GO:0031514">
    <property type="term" value="C:motile cilium"/>
    <property type="evidence" value="ECO:0000250"/>
    <property type="project" value="UniProtKB"/>
</dbReference>
<dbReference type="GO" id="GO:0046526">
    <property type="term" value="F:D-xylulose reductase activity"/>
    <property type="evidence" value="ECO:0007669"/>
    <property type="project" value="UniProtKB-EC"/>
</dbReference>
<dbReference type="GO" id="GO:0003939">
    <property type="term" value="F:L-iditol 2-dehydrogenase (NAD+) activity"/>
    <property type="evidence" value="ECO:0007669"/>
    <property type="project" value="UniProtKB-EC"/>
</dbReference>
<dbReference type="GO" id="GO:0008270">
    <property type="term" value="F:zinc ion binding"/>
    <property type="evidence" value="ECO:0007669"/>
    <property type="project" value="InterPro"/>
</dbReference>
<dbReference type="GO" id="GO:0030317">
    <property type="term" value="P:flagellated sperm motility"/>
    <property type="evidence" value="ECO:0000250"/>
    <property type="project" value="UniProtKB"/>
</dbReference>
<dbReference type="GO" id="GO:0006062">
    <property type="term" value="P:sorbitol catabolic process"/>
    <property type="evidence" value="ECO:0007669"/>
    <property type="project" value="TreeGrafter"/>
</dbReference>
<dbReference type="CDD" id="cd05285">
    <property type="entry name" value="sorbitol_DH"/>
    <property type="match status" value="1"/>
</dbReference>
<dbReference type="FunFam" id="3.40.50.720:FF:000068">
    <property type="entry name" value="Sorbitol dehydrogenase"/>
    <property type="match status" value="1"/>
</dbReference>
<dbReference type="Gene3D" id="3.90.180.10">
    <property type="entry name" value="Medium-chain alcohol dehydrogenases, catalytic domain"/>
    <property type="match status" value="1"/>
</dbReference>
<dbReference type="Gene3D" id="3.40.50.720">
    <property type="entry name" value="NAD(P)-binding Rossmann-like Domain"/>
    <property type="match status" value="1"/>
</dbReference>
<dbReference type="InterPro" id="IPR013149">
    <property type="entry name" value="ADH-like_C"/>
</dbReference>
<dbReference type="InterPro" id="IPR013154">
    <property type="entry name" value="ADH-like_N"/>
</dbReference>
<dbReference type="InterPro" id="IPR002328">
    <property type="entry name" value="ADH_Zn_CS"/>
</dbReference>
<dbReference type="InterPro" id="IPR011032">
    <property type="entry name" value="GroES-like_sf"/>
</dbReference>
<dbReference type="InterPro" id="IPR036291">
    <property type="entry name" value="NAD(P)-bd_dom_sf"/>
</dbReference>
<dbReference type="InterPro" id="IPR020843">
    <property type="entry name" value="PKS_ER"/>
</dbReference>
<dbReference type="InterPro" id="IPR045306">
    <property type="entry name" value="SDH-like"/>
</dbReference>
<dbReference type="PANTHER" id="PTHR43161">
    <property type="entry name" value="SORBITOL DEHYDROGENASE"/>
    <property type="match status" value="1"/>
</dbReference>
<dbReference type="PANTHER" id="PTHR43161:SF9">
    <property type="entry name" value="SORBITOL DEHYDROGENASE"/>
    <property type="match status" value="1"/>
</dbReference>
<dbReference type="Pfam" id="PF08240">
    <property type="entry name" value="ADH_N"/>
    <property type="match status" value="1"/>
</dbReference>
<dbReference type="Pfam" id="PF00107">
    <property type="entry name" value="ADH_zinc_N"/>
    <property type="match status" value="1"/>
</dbReference>
<dbReference type="SMART" id="SM00829">
    <property type="entry name" value="PKS_ER"/>
    <property type="match status" value="1"/>
</dbReference>
<dbReference type="SUPFAM" id="SSF50129">
    <property type="entry name" value="GroES-like"/>
    <property type="match status" value="1"/>
</dbReference>
<dbReference type="SUPFAM" id="SSF51735">
    <property type="entry name" value="NAD(P)-binding Rossmann-fold domains"/>
    <property type="match status" value="1"/>
</dbReference>
<dbReference type="PROSITE" id="PS00059">
    <property type="entry name" value="ADH_ZINC"/>
    <property type="match status" value="1"/>
</dbReference>
<keyword id="KW-0007">Acetylation</keyword>
<keyword id="KW-0966">Cell projection</keyword>
<keyword id="KW-0969">Cilium</keyword>
<keyword id="KW-0282">Flagellum</keyword>
<keyword id="KW-0472">Membrane</keyword>
<keyword id="KW-0479">Metal-binding</keyword>
<keyword id="KW-0496">Mitochondrion</keyword>
<keyword id="KW-0520">NAD</keyword>
<keyword id="KW-0560">Oxidoreductase</keyword>
<keyword id="KW-0597">Phosphoprotein</keyword>
<keyword id="KW-1185">Reference proteome</keyword>
<keyword id="KW-0862">Zinc</keyword>
<feature type="initiator methionine" description="Removed" evidence="2">
    <location>
        <position position="1"/>
    </location>
</feature>
<feature type="chain" id="PRO_0000231004" description="Sorbitol dehydrogenase">
    <location>
        <begin position="2"/>
        <end position="357"/>
    </location>
</feature>
<feature type="binding site" evidence="1">
    <location>
        <position position="45"/>
    </location>
    <ligand>
        <name>Zn(2+)</name>
        <dbReference type="ChEBI" id="CHEBI:29105"/>
        <note>catalytic</note>
    </ligand>
</feature>
<feature type="binding site" evidence="1">
    <location>
        <position position="51"/>
    </location>
    <ligand>
        <name>substrate</name>
    </ligand>
</feature>
<feature type="binding site" evidence="1">
    <location>
        <position position="70"/>
    </location>
    <ligand>
        <name>Zn(2+)</name>
        <dbReference type="ChEBI" id="CHEBI:29105"/>
        <note>catalytic</note>
    </ligand>
</feature>
<feature type="binding site" evidence="1">
    <location>
        <position position="71"/>
    </location>
    <ligand>
        <name>Zn(2+)</name>
        <dbReference type="ChEBI" id="CHEBI:29105"/>
        <note>catalytic</note>
    </ligand>
</feature>
<feature type="binding site" evidence="1">
    <location>
        <position position="156"/>
    </location>
    <ligand>
        <name>substrate</name>
    </ligand>
</feature>
<feature type="binding site" evidence="2">
    <location>
        <position position="184"/>
    </location>
    <ligand>
        <name>NAD(+)</name>
        <dbReference type="ChEBI" id="CHEBI:57540"/>
    </ligand>
</feature>
<feature type="binding site" evidence="2">
    <location>
        <position position="204"/>
    </location>
    <ligand>
        <name>NAD(+)</name>
        <dbReference type="ChEBI" id="CHEBI:57540"/>
    </ligand>
</feature>
<feature type="binding site" evidence="2">
    <location>
        <position position="209"/>
    </location>
    <ligand>
        <name>NAD(+)</name>
        <dbReference type="ChEBI" id="CHEBI:57540"/>
    </ligand>
</feature>
<feature type="binding site" evidence="2">
    <location>
        <begin position="273"/>
        <end position="275"/>
    </location>
    <ligand>
        <name>NAD(+)</name>
        <dbReference type="ChEBI" id="CHEBI:57540"/>
    </ligand>
</feature>
<feature type="binding site" evidence="2">
    <location>
        <begin position="297"/>
        <end position="299"/>
    </location>
    <ligand>
        <name>NAD(+)</name>
        <dbReference type="ChEBI" id="CHEBI:57540"/>
    </ligand>
</feature>
<feature type="binding site" evidence="1">
    <location>
        <position position="299"/>
    </location>
    <ligand>
        <name>substrate</name>
    </ligand>
</feature>
<feature type="binding site" evidence="1">
    <location>
        <position position="300"/>
    </location>
    <ligand>
        <name>substrate</name>
    </ligand>
</feature>
<feature type="modified residue" description="N-acetylalanine" evidence="2">
    <location>
        <position position="2"/>
    </location>
</feature>
<feature type="modified residue" description="Phosphoserine" evidence="2">
    <location>
        <position position="211"/>
    </location>
</feature>
<feature type="modified residue" description="Phosphoserine" evidence="2">
    <location>
        <position position="225"/>
    </location>
</feature>
<sequence>MAAAAKPKNLSLVVHGPGDLRLENYPIPEPGPNEVLLRMHSVGICGSDVHYWEEGRIGNFIVKKPMVLGHEASGTVEKVGSLVKHLKPGDRVAIEPGVPRENDEFCKSGRYNLSPSIFFCATPPDDGNLCRFYKHNAAFCYKLPDNVTFEEGALIEPLSVGIHACRRGGVTLGHRVLVCGAGPIGVVSLLVAKAMGAAQVVVTDLSAPRLSKAKEIGADLVLQISKESPQEIAGKVEGLLGCKPEVTIECTGAEASIQAGIYATRSGGTLVLVGLGSEMTTIPLLHAAVREVDIKGVFRYCNTWPVAISMLASKSVNIKPLVTHRFPLEKALEAFETFKKGLGLKIMLKCDPNDQNP</sequence>
<evidence type="ECO:0000250" key="1">
    <source>
        <dbReference type="UniProtKB" id="P07846"/>
    </source>
</evidence>
<evidence type="ECO:0000250" key="2">
    <source>
        <dbReference type="UniProtKB" id="Q00796"/>
    </source>
</evidence>
<evidence type="ECO:0000250" key="3">
    <source>
        <dbReference type="UniProtKB" id="Q64442"/>
    </source>
</evidence>
<evidence type="ECO:0000305" key="4"/>
<accession>Q4R639</accession>
<reference key="1">
    <citation type="submission" date="2005-06" db="EMBL/GenBank/DDBJ databases">
        <title>DNA sequences of macaque genes expressed in brain or testis and its evolutionary implications.</title>
        <authorList>
            <consortium name="International consortium for macaque cDNA sequencing and analysis"/>
        </authorList>
    </citation>
    <scope>NUCLEOTIDE SEQUENCE [LARGE SCALE MRNA]</scope>
    <source>
        <tissue>Testis</tissue>
    </source>
</reference>
<comment type="function">
    <text evidence="1 2">Polyol dehydrogenase that catalyzes the reversible NAD(+)-dependent oxidation of various sugar alcohols. Is active with xylitol, L-iditol and D-sorbitol (D-glucitol) as substrates, leading to the C2-oxidized products D-xylulose, L-sorbose and D-fructose, respectively (By similarity). Is a key enzyme in the polyol pathway that interconverts glucose and fructose via sorbitol, which constitutes an important alternate route for glucose metabolism. May play a role in sperm motility by using sorbitol as an alternative energy source for sperm motility (By similarity).</text>
</comment>
<comment type="catalytic activity">
    <reaction evidence="1">
        <text>xylitol + NAD(+) = D-xylulose + NADH + H(+)</text>
        <dbReference type="Rhea" id="RHEA:20433"/>
        <dbReference type="ChEBI" id="CHEBI:15378"/>
        <dbReference type="ChEBI" id="CHEBI:17140"/>
        <dbReference type="ChEBI" id="CHEBI:17151"/>
        <dbReference type="ChEBI" id="CHEBI:57540"/>
        <dbReference type="ChEBI" id="CHEBI:57945"/>
        <dbReference type="EC" id="1.1.1.9"/>
    </reaction>
</comment>
<comment type="catalytic activity">
    <reaction evidence="1">
        <text>L-iditol + NAD(+) = keto-L-sorbose + NADH + H(+)</text>
        <dbReference type="Rhea" id="RHEA:10160"/>
        <dbReference type="ChEBI" id="CHEBI:13172"/>
        <dbReference type="ChEBI" id="CHEBI:15378"/>
        <dbReference type="ChEBI" id="CHEBI:18202"/>
        <dbReference type="ChEBI" id="CHEBI:57540"/>
        <dbReference type="ChEBI" id="CHEBI:57945"/>
        <dbReference type="EC" id="1.1.1.14"/>
    </reaction>
</comment>
<comment type="catalytic activity">
    <reaction evidence="1">
        <text>keto-D-fructose + NADH + H(+) = D-sorbitol + NAD(+)</text>
        <dbReference type="Rhea" id="RHEA:33031"/>
        <dbReference type="ChEBI" id="CHEBI:15378"/>
        <dbReference type="ChEBI" id="CHEBI:17924"/>
        <dbReference type="ChEBI" id="CHEBI:48095"/>
        <dbReference type="ChEBI" id="CHEBI:57540"/>
        <dbReference type="ChEBI" id="CHEBI:57945"/>
    </reaction>
</comment>
<comment type="cofactor">
    <cofactor evidence="1">
        <name>Zn(2+)</name>
        <dbReference type="ChEBI" id="CHEBI:29105"/>
    </cofactor>
    <text evidence="1">Binds 1 zinc ion per subunit.</text>
</comment>
<comment type="subunit">
    <text evidence="1">Homotetramer.</text>
</comment>
<comment type="subcellular location">
    <subcellularLocation>
        <location evidence="3">Mitochondrion membrane</location>
        <topology evidence="3">Peripheral membrane protein</topology>
    </subcellularLocation>
    <subcellularLocation>
        <location evidence="3">Cell projection</location>
        <location evidence="3">Cilium</location>
        <location evidence="3">Flagellum</location>
    </subcellularLocation>
    <text evidence="3">Associated with mitochondria of the midpiece and near the plasma membrane in the principal piece of the flagellum. Also found in the epididymosome, secreted by the epididymal epithelium and that transfers proteins from the epididymal fluid to the sperm surface.</text>
</comment>
<comment type="similarity">
    <text evidence="4">Belongs to the zinc-containing alcohol dehydrogenase family.</text>
</comment>
<organism>
    <name type="scientific">Macaca fascicularis</name>
    <name type="common">Crab-eating macaque</name>
    <name type="synonym">Cynomolgus monkey</name>
    <dbReference type="NCBI Taxonomy" id="9541"/>
    <lineage>
        <taxon>Eukaryota</taxon>
        <taxon>Metazoa</taxon>
        <taxon>Chordata</taxon>
        <taxon>Craniata</taxon>
        <taxon>Vertebrata</taxon>
        <taxon>Euteleostomi</taxon>
        <taxon>Mammalia</taxon>
        <taxon>Eutheria</taxon>
        <taxon>Euarchontoglires</taxon>
        <taxon>Primates</taxon>
        <taxon>Haplorrhini</taxon>
        <taxon>Catarrhini</taxon>
        <taxon>Cercopithecidae</taxon>
        <taxon>Cercopithecinae</taxon>
        <taxon>Macaca</taxon>
    </lineage>
</organism>
<gene>
    <name type="primary">SORD</name>
    <name type="ORF">QtsA-19202</name>
</gene>
<name>DHSO_MACFA</name>